<accession>Q9Z5I4</accession>
<dbReference type="EC" id="5.4.99.25" evidence="1"/>
<dbReference type="EMBL" id="AL035472">
    <property type="protein sequence ID" value="CAB36580.1"/>
    <property type="molecule type" value="Genomic_DNA"/>
</dbReference>
<dbReference type="EMBL" id="AL583922">
    <property type="protein sequence ID" value="CAC30497.1"/>
    <property type="molecule type" value="Genomic_DNA"/>
</dbReference>
<dbReference type="PIR" id="D87102">
    <property type="entry name" value="D87102"/>
</dbReference>
<dbReference type="RefSeq" id="NP_302076.1">
    <property type="nucleotide sequence ID" value="NC_002677.1"/>
</dbReference>
<dbReference type="RefSeq" id="WP_010908397.1">
    <property type="nucleotide sequence ID" value="NC_002677.1"/>
</dbReference>
<dbReference type="SMR" id="Q9Z5I4"/>
<dbReference type="STRING" id="272631.gene:17575387"/>
<dbReference type="KEGG" id="mle:ML1546"/>
<dbReference type="PATRIC" id="fig|272631.5.peg.2918"/>
<dbReference type="Leproma" id="ML1546"/>
<dbReference type="eggNOG" id="COG0130">
    <property type="taxonomic scope" value="Bacteria"/>
</dbReference>
<dbReference type="HOGENOM" id="CLU_032087_0_0_11"/>
<dbReference type="OrthoDB" id="9802309at2"/>
<dbReference type="Proteomes" id="UP000000806">
    <property type="component" value="Chromosome"/>
</dbReference>
<dbReference type="GO" id="GO:0003723">
    <property type="term" value="F:RNA binding"/>
    <property type="evidence" value="ECO:0007669"/>
    <property type="project" value="InterPro"/>
</dbReference>
<dbReference type="GO" id="GO:0160148">
    <property type="term" value="F:tRNA pseudouridine(55) synthase activity"/>
    <property type="evidence" value="ECO:0007669"/>
    <property type="project" value="UniProtKB-EC"/>
</dbReference>
<dbReference type="GO" id="GO:1990481">
    <property type="term" value="P:mRNA pseudouridine synthesis"/>
    <property type="evidence" value="ECO:0007669"/>
    <property type="project" value="TreeGrafter"/>
</dbReference>
<dbReference type="GO" id="GO:0031119">
    <property type="term" value="P:tRNA pseudouridine synthesis"/>
    <property type="evidence" value="ECO:0007669"/>
    <property type="project" value="UniProtKB-UniRule"/>
</dbReference>
<dbReference type="CDD" id="cd02573">
    <property type="entry name" value="PseudoU_synth_EcTruB"/>
    <property type="match status" value="1"/>
</dbReference>
<dbReference type="FunFam" id="3.30.2350.10:FF:000011">
    <property type="entry name" value="tRNA pseudouridine synthase B"/>
    <property type="match status" value="1"/>
</dbReference>
<dbReference type="Gene3D" id="3.30.2350.10">
    <property type="entry name" value="Pseudouridine synthase"/>
    <property type="match status" value="1"/>
</dbReference>
<dbReference type="Gene3D" id="2.30.130.10">
    <property type="entry name" value="PUA domain"/>
    <property type="match status" value="1"/>
</dbReference>
<dbReference type="HAMAP" id="MF_01080">
    <property type="entry name" value="TruB_bact"/>
    <property type="match status" value="1"/>
</dbReference>
<dbReference type="InterPro" id="IPR020103">
    <property type="entry name" value="PsdUridine_synth_cat_dom_sf"/>
</dbReference>
<dbReference type="InterPro" id="IPR002501">
    <property type="entry name" value="PsdUridine_synth_N"/>
</dbReference>
<dbReference type="InterPro" id="IPR015947">
    <property type="entry name" value="PUA-like_sf"/>
</dbReference>
<dbReference type="InterPro" id="IPR036974">
    <property type="entry name" value="PUA_sf"/>
</dbReference>
<dbReference type="InterPro" id="IPR015225">
    <property type="entry name" value="tRNA_psdUridine_synth_fam2_C"/>
</dbReference>
<dbReference type="InterPro" id="IPR014780">
    <property type="entry name" value="tRNA_psdUridine_synth_TruB"/>
</dbReference>
<dbReference type="InterPro" id="IPR032819">
    <property type="entry name" value="TruB_C"/>
</dbReference>
<dbReference type="NCBIfam" id="TIGR00431">
    <property type="entry name" value="TruB"/>
    <property type="match status" value="1"/>
</dbReference>
<dbReference type="PANTHER" id="PTHR13767:SF2">
    <property type="entry name" value="PSEUDOURIDYLATE SYNTHASE TRUB1"/>
    <property type="match status" value="1"/>
</dbReference>
<dbReference type="PANTHER" id="PTHR13767">
    <property type="entry name" value="TRNA-PSEUDOURIDINE SYNTHASE"/>
    <property type="match status" value="1"/>
</dbReference>
<dbReference type="Pfam" id="PF09142">
    <property type="entry name" value="TruB_C"/>
    <property type="match status" value="1"/>
</dbReference>
<dbReference type="Pfam" id="PF16198">
    <property type="entry name" value="TruB_C_2"/>
    <property type="match status" value="1"/>
</dbReference>
<dbReference type="Pfam" id="PF01509">
    <property type="entry name" value="TruB_N"/>
    <property type="match status" value="1"/>
</dbReference>
<dbReference type="SUPFAM" id="SSF55120">
    <property type="entry name" value="Pseudouridine synthase"/>
    <property type="match status" value="1"/>
</dbReference>
<dbReference type="SUPFAM" id="SSF88697">
    <property type="entry name" value="PUA domain-like"/>
    <property type="match status" value="1"/>
</dbReference>
<protein>
    <recommendedName>
        <fullName evidence="1">tRNA pseudouridine synthase B</fullName>
        <ecNumber evidence="1">5.4.99.25</ecNumber>
    </recommendedName>
    <alternativeName>
        <fullName evidence="1">tRNA pseudouridine(55) synthase</fullName>
        <shortName evidence="1">Psi55 synthase</shortName>
    </alternativeName>
    <alternativeName>
        <fullName evidence="1">tRNA pseudouridylate synthase</fullName>
    </alternativeName>
    <alternativeName>
        <fullName evidence="1">tRNA-uridine isomerase</fullName>
    </alternativeName>
</protein>
<evidence type="ECO:0000255" key="1">
    <source>
        <dbReference type="HAMAP-Rule" id="MF_01080"/>
    </source>
</evidence>
<organism>
    <name type="scientific">Mycobacterium leprae (strain TN)</name>
    <dbReference type="NCBI Taxonomy" id="272631"/>
    <lineage>
        <taxon>Bacteria</taxon>
        <taxon>Bacillati</taxon>
        <taxon>Actinomycetota</taxon>
        <taxon>Actinomycetes</taxon>
        <taxon>Mycobacteriales</taxon>
        <taxon>Mycobacteriaceae</taxon>
        <taxon>Mycobacterium</taxon>
    </lineage>
</organism>
<sequence length="320" mass="34180">MSESSTGAGLGPGIVVIDKPSGMTSHDVVARCRRIFCTRRVGHAGTLDPMATGVLVLGVDRATKILGLLAGASKEYVATIRLGQTTSTEDAEGELLQCVSARHVTDEAIATAIGRLRGDIKQVPSAVSAIKVDGRRAYRLVREGHVVELQARPVRIDRFEVLAVRPGPEVGLADVIDLDVEVECSSGTYIRALARDLGDAFGVGGHLTSLRRTRVGRFELDQAWSLEDLAELPRLSRTLDETCLLMFPRRDLTVSEVEATSNGRPISSAGIDGIYAASDADGRVIALLRDEGPRTKSVVVLHPVFVRVSIGRGIVGVIEA</sequence>
<gene>
    <name evidence="1" type="primary">truB</name>
    <name type="ordered locus">ML1546</name>
    <name type="ORF">MLCB596.24</name>
</gene>
<keyword id="KW-0413">Isomerase</keyword>
<keyword id="KW-1185">Reference proteome</keyword>
<keyword id="KW-0819">tRNA processing</keyword>
<comment type="function">
    <text evidence="1">Responsible for synthesis of pseudouridine from uracil-55 in the psi GC loop of transfer RNAs.</text>
</comment>
<comment type="catalytic activity">
    <reaction evidence="1">
        <text>uridine(55) in tRNA = pseudouridine(55) in tRNA</text>
        <dbReference type="Rhea" id="RHEA:42532"/>
        <dbReference type="Rhea" id="RHEA-COMP:10101"/>
        <dbReference type="Rhea" id="RHEA-COMP:10102"/>
        <dbReference type="ChEBI" id="CHEBI:65314"/>
        <dbReference type="ChEBI" id="CHEBI:65315"/>
        <dbReference type="EC" id="5.4.99.25"/>
    </reaction>
</comment>
<comment type="similarity">
    <text evidence="1">Belongs to the pseudouridine synthase TruB family. Type 1 subfamily.</text>
</comment>
<feature type="chain" id="PRO_0000121871" description="tRNA pseudouridine synthase B">
    <location>
        <begin position="1"/>
        <end position="320"/>
    </location>
</feature>
<feature type="active site" description="Nucleophile" evidence="1">
    <location>
        <position position="48"/>
    </location>
</feature>
<reference key="1">
    <citation type="journal article" date="2001" name="Nature">
        <title>Massive gene decay in the leprosy bacillus.</title>
        <authorList>
            <person name="Cole S.T."/>
            <person name="Eiglmeier K."/>
            <person name="Parkhill J."/>
            <person name="James K.D."/>
            <person name="Thomson N.R."/>
            <person name="Wheeler P.R."/>
            <person name="Honore N."/>
            <person name="Garnier T."/>
            <person name="Churcher C.M."/>
            <person name="Harris D.E."/>
            <person name="Mungall K.L."/>
            <person name="Basham D."/>
            <person name="Brown D."/>
            <person name="Chillingworth T."/>
            <person name="Connor R."/>
            <person name="Davies R.M."/>
            <person name="Devlin K."/>
            <person name="Duthoy S."/>
            <person name="Feltwell T."/>
            <person name="Fraser A."/>
            <person name="Hamlin N."/>
            <person name="Holroyd S."/>
            <person name="Hornsby T."/>
            <person name="Jagels K."/>
            <person name="Lacroix C."/>
            <person name="Maclean J."/>
            <person name="Moule S."/>
            <person name="Murphy L.D."/>
            <person name="Oliver K."/>
            <person name="Quail M.A."/>
            <person name="Rajandream M.A."/>
            <person name="Rutherford K.M."/>
            <person name="Rutter S."/>
            <person name="Seeger K."/>
            <person name="Simon S."/>
            <person name="Simmonds M."/>
            <person name="Skelton J."/>
            <person name="Squares R."/>
            <person name="Squares S."/>
            <person name="Stevens K."/>
            <person name="Taylor K."/>
            <person name="Whitehead S."/>
            <person name="Woodward J.R."/>
            <person name="Barrell B.G."/>
        </authorList>
    </citation>
    <scope>NUCLEOTIDE SEQUENCE [LARGE SCALE GENOMIC DNA]</scope>
    <source>
        <strain>TN</strain>
    </source>
</reference>
<proteinExistence type="inferred from homology"/>
<name>TRUB_MYCLE</name>